<sequence>MDSDEGYNYEFDEDEECSEEDSGAEEEEDEDDDEPDDDTLDLGEVELVEPGLGVGGERDGLLCGETGGGGGSALGPGGGGGGGGGGGGGGPGHEQEEDYRYEVLTAEQILQHMVECIREVNEVIQNPATITRILLSHFNWDKEKLMERYFDGNLEKLFAECHVINPSKKSRTRQMNTRSSAQDMPCQICYLNYPNSYFTGLECGHKFCMQCWSEYLTTKIMEEGMGQTISCPAHGCDILVDDNTVMRLITDSKVKLKYQHLITNSFVECNRLLKWCPAPDCHHVVKVQYPDAKPVRCKCGRQFCFNCGENWHDPVKCKWLKKWIKKCDDDSETSNWIAANTKECPKCHVTIEKDGGCNHMVCRNQNCKAEFCWVCLGPWEPHGSAWYNCNRYNEDDAKAARDAQERSRAALQRYLFYCNRYMNHMQSLRFEHKLYAQVKQKMEEMQQHNMSWIEVQFLKKAVDVLCQCRATLMYTYVFAFYLKKNNQSIIFENNQADLENATEVLSGYLERDISQDSLQDIKQKVQDKYRYCESRRRVLLQHVHEGYEKDLWEYIED</sequence>
<accession>Q9Y4X5</accession>
<accession>B2R6U3</accession>
<accession>O76026</accession>
<accession>Q9H3T6</accession>
<accession>Q9UEN0</accession>
<accession>Q9UP39</accession>
<comment type="function">
    <text evidence="6 7 8 9 12 14 15 16 17">E3 ubiquitin-protein ligase, which catalyzes ubiquitination of target proteins together with ubiquitin-conjugating enzyme E2 UBE2L3 (PubMed:15236971, PubMed:21532592, PubMed:23707686, PubMed:24076655, PubMed:27565346). Acts as an atypical E3 ubiquitin-protein ligase by working together with cullin-RING ubiquitin ligase (CRL) complexes and initiating ubiquitination of CRL substrates: associates with CRL complexes and specifically mediates addition of the first ubiquitin on CRLs targets (PubMed:27565346). The initial ubiquitin is then elongated by CDC34/UBE2R1 and UBE2R2 (PubMed:27565346). E3 ubiquitin-protein ligase activity is activated upon binding to neddylated cullin-RING ubiquitin ligase complexes (PubMed:24076655, PubMed:27565346). Plays a role in protein translation in response to DNA damage by mediating ubiquitination of EIF4E2, the consequences of EIF4E2 ubiquitination are however unclear (PubMed:25624349). According to a report, EIF4E2 ubiquitination leads to promote EIF4E2 cap-binding and protein translation arrest (PubMed:25624349). According to another report EIF4E2 ubiquitination leads to its subsequent degradation (PubMed:14623119). Acts as the ligase involved in ISGylation of EIF4E2 (PubMed:17289916). In vitro, controls the degradation of the LINC (LInker of Nucleoskeleton and Cytoskeleton) complex member SUN2 and may therefore have a role in the formation and localization of the LINC complex, and as a consequence, nuclear subcellular localization and nuclear morphology (PubMed:29689197).</text>
</comment>
<comment type="catalytic activity">
    <reaction evidence="7 9 16">
        <text>[E2 ubiquitin-conjugating enzyme]-S-ubiquitinyl-L-cysteine + [acceptor protein]-L-lysine = [E2 ubiquitin-conjugating enzyme]-L-cysteine + [acceptor protein]-N(6)-ubiquitinyl-L-lysine.</text>
        <dbReference type="EC" id="2.3.2.31"/>
    </reaction>
</comment>
<comment type="activity regulation">
    <text evidence="12 14 16">Autoinhibited by the ariadne domain, which masks the second RING-type zinc finger that contains the active site and inhibits the E3 activity (PubMed:23707686). Inhibition is relieved upon binding to neddylated cullin-RING ubiquitin ligase complexes, which activate the E3 ligase activity of ARIH1 (PubMed:24076655, PubMed:27565346).</text>
</comment>
<comment type="pathway">
    <text>Protein modification; protein ubiquitination.</text>
</comment>
<comment type="subunit">
    <text evidence="5 9 12 14 16">Interacts (via the first RING-type zinc finger) with UBE2L3 (PubMed:11278816, PubMed:21532592, PubMed:23707686, PubMed:24076655). Associates with cullin-RING ubiquitin ligase (CRL) complexes containing CUL1, CUL2 and CUL3 (PubMed:24076655, PubMed:27565346). Interacts with neddylated CUL1 (PubMed:24076655, PubMed:27565346). Interacts with neddylated CUL2 (PubMed:24076655, PubMed:27565346). Interacts with neddylated CUL3 (PubMed:24076655, PubMed:27565346). Interacts with neddylated CUL4A (PubMed:24076655).</text>
</comment>
<comment type="interaction">
    <interactant intactId="EBI-2514233">
        <id>Q9Y4X5</id>
    </interactant>
    <interactant intactId="EBI-359390">
        <id>Q13616</id>
        <label>CUL1</label>
    </interactant>
    <organismsDiffer>false</organismsDiffer>
    <experiments>9</experiments>
</comment>
<comment type="interaction">
    <interactant intactId="EBI-2514233">
        <id>Q9Y4X5</id>
    </interactant>
    <interactant intactId="EBI-7954026">
        <id>Q8TD90</id>
        <label>MAGEE2</label>
    </interactant>
    <organismsDiffer>false</organismsDiffer>
    <experiments>2</experiments>
</comment>
<comment type="interaction">
    <interactant intactId="EBI-2514233">
        <id>Q9Y4X5</id>
    </interactant>
    <interactant intactId="EBI-711173">
        <id>P68036</id>
        <label>UBE2L3</label>
    </interactant>
    <organismsDiffer>false</organismsDiffer>
    <experiments>7</experiments>
</comment>
<comment type="interaction">
    <interactant intactId="EBI-2514233">
        <id>Q9Y4X5</id>
    </interactant>
    <interactant intactId="EBI-15556257">
        <id>P68036-1</id>
        <label>UBE2L3</label>
    </interactant>
    <organismsDiffer>false</organismsDiffer>
    <experiments>3</experiments>
</comment>
<comment type="interaction">
    <interactant intactId="EBI-2514233">
        <id>Q9Y4X5</id>
    </interactant>
    <interactant intactId="EBI-11041653">
        <id>P13682</id>
        <label>ZNF35</label>
    </interactant>
    <organismsDiffer>false</organismsDiffer>
    <experiments>2</experiments>
</comment>
<comment type="subcellular location">
    <subcellularLocation>
        <location evidence="5 10 11">Cytoplasm</location>
    </subcellularLocation>
    <subcellularLocation>
        <location evidence="11">Nucleus</location>
    </subcellularLocation>
    <subcellularLocation>
        <location evidence="11">Nucleus</location>
        <location evidence="11">Cajal body</location>
    </subcellularLocation>
    <text evidence="5 10">Mainly cytoplasmic (PubMed:11278816). Present in Lewy body (PubMed:21590270).</text>
</comment>
<comment type="tissue specificity">
    <text evidence="4">Widely expressed.</text>
</comment>
<comment type="induction">
    <text evidence="15">Up-regulated following DNA damage (PubMed:25624349).</text>
</comment>
<comment type="domain">
    <text evidence="9 12">Members of the RBR family are atypical E3 ligases. They interact with the E2 conjugating enzyme UBE2L3 and function like HECT-type E3 enzymes: they bind E2s via the first RING-type zinc finger, but require an obligate trans-thiolation step during the ubiquitin transfer, requiring a conserved active site Cys residue in the second RING-type zinc finger (PubMed:21532592, PubMed:23707686). The active site probably forms a thioester intermediate with ubiquitin taken from the active-site cysteine of the E2 before ultimately transferring it to a Lys residue on the substrate (PubMed:21532592, PubMed:23707686).</text>
</comment>
<comment type="domain">
    <text evidence="12">The Ariadne domain inhibits activity by masking the second RING-type zinc finger that contains the active site (PubMed:23707686).</text>
</comment>
<comment type="disease">
    <text evidence="17">Defects in ARIH1 have been found in several individuals with thoracic aortic aneurysms and cerebrovascular disease.</text>
</comment>
<comment type="similarity">
    <text evidence="23">Belongs to the RBR family. Ariadne subfamily.</text>
</comment>
<comment type="caution">
    <text evidence="7 12 13">The RING-type 2 zinc finger was initially reported to only bind 1 zinc ion instead of 2 compared to classical RING-types (PubMed:15236971). But it was later shown that it is not the case and binds 2 zinc ions (PubMed:23707686, PubMed:24058416).</text>
</comment>
<keyword id="KW-0002">3D-structure</keyword>
<keyword id="KW-0007">Acetylation</keyword>
<keyword id="KW-0963">Cytoplasm</keyword>
<keyword id="KW-0225">Disease variant</keyword>
<keyword id="KW-0479">Metal-binding</keyword>
<keyword id="KW-0539">Nucleus</keyword>
<keyword id="KW-1267">Proteomics identification</keyword>
<keyword id="KW-1185">Reference proteome</keyword>
<keyword id="KW-0677">Repeat</keyword>
<keyword id="KW-0808">Transferase</keyword>
<keyword id="KW-0833">Ubl conjugation pathway</keyword>
<keyword id="KW-0862">Zinc</keyword>
<keyword id="KW-0863">Zinc-finger</keyword>
<proteinExistence type="evidence at protein level"/>
<organism>
    <name type="scientific">Homo sapiens</name>
    <name type="common">Human</name>
    <dbReference type="NCBI Taxonomy" id="9606"/>
    <lineage>
        <taxon>Eukaryota</taxon>
        <taxon>Metazoa</taxon>
        <taxon>Chordata</taxon>
        <taxon>Craniata</taxon>
        <taxon>Vertebrata</taxon>
        <taxon>Euteleostomi</taxon>
        <taxon>Mammalia</taxon>
        <taxon>Eutheria</taxon>
        <taxon>Euarchontoglires</taxon>
        <taxon>Primates</taxon>
        <taxon>Haplorrhini</taxon>
        <taxon>Catarrhini</taxon>
        <taxon>Hominidae</taxon>
        <taxon>Homo</taxon>
    </lineage>
</organism>
<reference key="1">
    <citation type="journal article" date="1999" name="J. Biol. Chem.">
        <title>The ubiquitin-conjugating enzymes UbcH7 and UbcH8 interact with RING finger/IBR motif-containing domains of HHARI and H7-AP1.</title>
        <authorList>
            <person name="Moynihan T.P."/>
            <person name="Ardley H.C."/>
            <person name="Nuber U."/>
            <person name="Rose S.A."/>
            <person name="Jones P.F."/>
            <person name="Markham A.F."/>
            <person name="Scheffner M."/>
            <person name="Robinson P.A."/>
        </authorList>
    </citation>
    <scope>NUCLEOTIDE SEQUENCE [MRNA]</scope>
    <scope>TISSUE SPECIFICITY</scope>
    <source>
        <tissue>Fetal brain</tissue>
    </source>
</reference>
<reference key="2">
    <citation type="submission" date="2002-05" db="UniProtKB">
        <authorList>
            <person name="Ardley H.C."/>
        </authorList>
    </citation>
    <scope>SEQUENCE REVISION TO 227</scope>
</reference>
<reference key="3">
    <citation type="submission" date="1998-06" db="EMBL/GenBank/DDBJ databases">
        <title>Human ariadne homolog.</title>
        <authorList>
            <person name="Trockenbacher A."/>
            <person name="Marksteiner R."/>
            <person name="Schneider R."/>
        </authorList>
    </citation>
    <scope>NUCLEOTIDE SEQUENCE [MRNA]</scope>
    <source>
        <tissue>Brain</tissue>
    </source>
</reference>
<reference key="4">
    <citation type="journal article" date="2004" name="Nat. Genet.">
        <title>Complete sequencing and characterization of 21,243 full-length human cDNAs.</title>
        <authorList>
            <person name="Ota T."/>
            <person name="Suzuki Y."/>
            <person name="Nishikawa T."/>
            <person name="Otsuki T."/>
            <person name="Sugiyama T."/>
            <person name="Irie R."/>
            <person name="Wakamatsu A."/>
            <person name="Hayashi K."/>
            <person name="Sato H."/>
            <person name="Nagai K."/>
            <person name="Kimura K."/>
            <person name="Makita H."/>
            <person name="Sekine M."/>
            <person name="Obayashi M."/>
            <person name="Nishi T."/>
            <person name="Shibahara T."/>
            <person name="Tanaka T."/>
            <person name="Ishii S."/>
            <person name="Yamamoto J."/>
            <person name="Saito K."/>
            <person name="Kawai Y."/>
            <person name="Isono Y."/>
            <person name="Nakamura Y."/>
            <person name="Nagahari K."/>
            <person name="Murakami K."/>
            <person name="Yasuda T."/>
            <person name="Iwayanagi T."/>
            <person name="Wagatsuma M."/>
            <person name="Shiratori A."/>
            <person name="Sudo H."/>
            <person name="Hosoiri T."/>
            <person name="Kaku Y."/>
            <person name="Kodaira H."/>
            <person name="Kondo H."/>
            <person name="Sugawara M."/>
            <person name="Takahashi M."/>
            <person name="Kanda K."/>
            <person name="Yokoi T."/>
            <person name="Furuya T."/>
            <person name="Kikkawa E."/>
            <person name="Omura Y."/>
            <person name="Abe K."/>
            <person name="Kamihara K."/>
            <person name="Katsuta N."/>
            <person name="Sato K."/>
            <person name="Tanikawa M."/>
            <person name="Yamazaki M."/>
            <person name="Ninomiya K."/>
            <person name="Ishibashi T."/>
            <person name="Yamashita H."/>
            <person name="Murakawa K."/>
            <person name="Fujimori K."/>
            <person name="Tanai H."/>
            <person name="Kimata M."/>
            <person name="Watanabe M."/>
            <person name="Hiraoka S."/>
            <person name="Chiba Y."/>
            <person name="Ishida S."/>
            <person name="Ono Y."/>
            <person name="Takiguchi S."/>
            <person name="Watanabe S."/>
            <person name="Yosida M."/>
            <person name="Hotuta T."/>
            <person name="Kusano J."/>
            <person name="Kanehori K."/>
            <person name="Takahashi-Fujii A."/>
            <person name="Hara H."/>
            <person name="Tanase T.-O."/>
            <person name="Nomura Y."/>
            <person name="Togiya S."/>
            <person name="Komai F."/>
            <person name="Hara R."/>
            <person name="Takeuchi K."/>
            <person name="Arita M."/>
            <person name="Imose N."/>
            <person name="Musashino K."/>
            <person name="Yuuki H."/>
            <person name="Oshima A."/>
            <person name="Sasaki N."/>
            <person name="Aotsuka S."/>
            <person name="Yoshikawa Y."/>
            <person name="Matsunawa H."/>
            <person name="Ichihara T."/>
            <person name="Shiohata N."/>
            <person name="Sano S."/>
            <person name="Moriya S."/>
            <person name="Momiyama H."/>
            <person name="Satoh N."/>
            <person name="Takami S."/>
            <person name="Terashima Y."/>
            <person name="Suzuki O."/>
            <person name="Nakagawa S."/>
            <person name="Senoh A."/>
            <person name="Mizoguchi H."/>
            <person name="Goto Y."/>
            <person name="Shimizu F."/>
            <person name="Wakebe H."/>
            <person name="Hishigaki H."/>
            <person name="Watanabe T."/>
            <person name="Sugiyama A."/>
            <person name="Takemoto M."/>
            <person name="Kawakami B."/>
            <person name="Yamazaki M."/>
            <person name="Watanabe K."/>
            <person name="Kumagai A."/>
            <person name="Itakura S."/>
            <person name="Fukuzumi Y."/>
            <person name="Fujimori Y."/>
            <person name="Komiyama M."/>
            <person name="Tashiro H."/>
            <person name="Tanigami A."/>
            <person name="Fujiwara T."/>
            <person name="Ono T."/>
            <person name="Yamada K."/>
            <person name="Fujii Y."/>
            <person name="Ozaki K."/>
            <person name="Hirao M."/>
            <person name="Ohmori Y."/>
            <person name="Kawabata A."/>
            <person name="Hikiji T."/>
            <person name="Kobatake N."/>
            <person name="Inagaki H."/>
            <person name="Ikema Y."/>
            <person name="Okamoto S."/>
            <person name="Okitani R."/>
            <person name="Kawakami T."/>
            <person name="Noguchi S."/>
            <person name="Itoh T."/>
            <person name="Shigeta K."/>
            <person name="Senba T."/>
            <person name="Matsumura K."/>
            <person name="Nakajima Y."/>
            <person name="Mizuno T."/>
            <person name="Morinaga M."/>
            <person name="Sasaki M."/>
            <person name="Togashi T."/>
            <person name="Oyama M."/>
            <person name="Hata H."/>
            <person name="Watanabe M."/>
            <person name="Komatsu T."/>
            <person name="Mizushima-Sugano J."/>
            <person name="Satoh T."/>
            <person name="Shirai Y."/>
            <person name="Takahashi Y."/>
            <person name="Nakagawa K."/>
            <person name="Okumura K."/>
            <person name="Nagase T."/>
            <person name="Nomura N."/>
            <person name="Kikuchi H."/>
            <person name="Masuho Y."/>
            <person name="Yamashita R."/>
            <person name="Nakai K."/>
            <person name="Yada T."/>
            <person name="Nakamura Y."/>
            <person name="Ohara O."/>
            <person name="Isogai T."/>
            <person name="Sugano S."/>
        </authorList>
    </citation>
    <scope>NUCLEOTIDE SEQUENCE [LARGE SCALE MRNA]</scope>
    <source>
        <tissue>Brain</tissue>
    </source>
</reference>
<reference key="5">
    <citation type="journal article" date="2006" name="Nature">
        <title>Analysis of the DNA sequence and duplication history of human chromosome 15.</title>
        <authorList>
            <person name="Zody M.C."/>
            <person name="Garber M."/>
            <person name="Sharpe T."/>
            <person name="Young S.K."/>
            <person name="Rowen L."/>
            <person name="O'Neill K."/>
            <person name="Whittaker C.A."/>
            <person name="Kamal M."/>
            <person name="Chang J.L."/>
            <person name="Cuomo C.A."/>
            <person name="Dewar K."/>
            <person name="FitzGerald M.G."/>
            <person name="Kodira C.D."/>
            <person name="Madan A."/>
            <person name="Qin S."/>
            <person name="Yang X."/>
            <person name="Abbasi N."/>
            <person name="Abouelleil A."/>
            <person name="Arachchi H.M."/>
            <person name="Baradarani L."/>
            <person name="Birditt B."/>
            <person name="Bloom S."/>
            <person name="Bloom T."/>
            <person name="Borowsky M.L."/>
            <person name="Burke J."/>
            <person name="Butler J."/>
            <person name="Cook A."/>
            <person name="DeArellano K."/>
            <person name="DeCaprio D."/>
            <person name="Dorris L. III"/>
            <person name="Dors M."/>
            <person name="Eichler E.E."/>
            <person name="Engels R."/>
            <person name="Fahey J."/>
            <person name="Fleetwood P."/>
            <person name="Friedman C."/>
            <person name="Gearin G."/>
            <person name="Hall J.L."/>
            <person name="Hensley G."/>
            <person name="Johnson E."/>
            <person name="Jones C."/>
            <person name="Kamat A."/>
            <person name="Kaur A."/>
            <person name="Locke D.P."/>
            <person name="Madan A."/>
            <person name="Munson G."/>
            <person name="Jaffe D.B."/>
            <person name="Lui A."/>
            <person name="Macdonald P."/>
            <person name="Mauceli E."/>
            <person name="Naylor J.W."/>
            <person name="Nesbitt R."/>
            <person name="Nicol R."/>
            <person name="O'Leary S.B."/>
            <person name="Ratcliffe A."/>
            <person name="Rounsley S."/>
            <person name="She X."/>
            <person name="Sneddon K.M.B."/>
            <person name="Stewart S."/>
            <person name="Sougnez C."/>
            <person name="Stone S.M."/>
            <person name="Topham K."/>
            <person name="Vincent D."/>
            <person name="Wang S."/>
            <person name="Zimmer A.R."/>
            <person name="Birren B.W."/>
            <person name="Hood L."/>
            <person name="Lander E.S."/>
            <person name="Nusbaum C."/>
        </authorList>
    </citation>
    <scope>NUCLEOTIDE SEQUENCE [LARGE SCALE GENOMIC DNA]</scope>
</reference>
<reference key="6">
    <citation type="submission" date="2005-07" db="EMBL/GenBank/DDBJ databases">
        <authorList>
            <person name="Mural R.J."/>
            <person name="Istrail S."/>
            <person name="Sutton G.G."/>
            <person name="Florea L."/>
            <person name="Halpern A.L."/>
            <person name="Mobarry C.M."/>
            <person name="Lippert R."/>
            <person name="Walenz B."/>
            <person name="Shatkay H."/>
            <person name="Dew I."/>
            <person name="Miller J.R."/>
            <person name="Flanigan M.J."/>
            <person name="Edwards N.J."/>
            <person name="Bolanos R."/>
            <person name="Fasulo D."/>
            <person name="Halldorsson B.V."/>
            <person name="Hannenhalli S."/>
            <person name="Turner R."/>
            <person name="Yooseph S."/>
            <person name="Lu F."/>
            <person name="Nusskern D.R."/>
            <person name="Shue B.C."/>
            <person name="Zheng X.H."/>
            <person name="Zhong F."/>
            <person name="Delcher A.L."/>
            <person name="Huson D.H."/>
            <person name="Kravitz S.A."/>
            <person name="Mouchard L."/>
            <person name="Reinert K."/>
            <person name="Remington K.A."/>
            <person name="Clark A.G."/>
            <person name="Waterman M.S."/>
            <person name="Eichler E.E."/>
            <person name="Adams M.D."/>
            <person name="Hunkapiller M.W."/>
            <person name="Myers E.W."/>
            <person name="Venter J.C."/>
        </authorList>
    </citation>
    <scope>NUCLEOTIDE SEQUENCE [LARGE SCALE GENOMIC DNA]</scope>
</reference>
<reference key="7">
    <citation type="journal article" date="2004" name="Genome Res.">
        <title>The status, quality, and expansion of the NIH full-length cDNA project: the Mammalian Gene Collection (MGC).</title>
        <authorList>
            <consortium name="The MGC Project Team"/>
        </authorList>
    </citation>
    <scope>NUCLEOTIDE SEQUENCE [LARGE SCALE MRNA]</scope>
    <source>
        <tissue>Brain</tissue>
    </source>
</reference>
<reference key="8">
    <citation type="journal article" date="2000" name="Genetics">
        <title>Ariadne-1: a vital Drosophila gene is required in development and defines a new conserved family of ring-finger proteins.</title>
        <authorList>
            <person name="Aguilera M."/>
            <person name="Oliveros M."/>
            <person name="Martinez-Padron M."/>
            <person name="Barbas J.A."/>
            <person name="Ferrus A."/>
        </authorList>
    </citation>
    <scope>NUCLEOTIDE SEQUENCE [MRNA] OF 95-557</scope>
</reference>
<reference key="9">
    <citation type="journal article" date="2001" name="Yeast">
        <title>Characterization of 16 novel human genes showing high similarity to yeast sequences.</title>
        <authorList>
            <person name="Stanchi F."/>
            <person name="Bertocco E."/>
            <person name="Toppo S."/>
            <person name="Dioguardi R."/>
            <person name="Simionati B."/>
            <person name="Cannata N."/>
            <person name="Zimbello R."/>
            <person name="Lanfranchi G."/>
            <person name="Valle G."/>
        </authorList>
    </citation>
    <scope>NUCLEOTIDE SEQUENCE [MRNA] OF 298-557</scope>
    <source>
        <tissue>Brain</tissue>
    </source>
</reference>
<reference key="10">
    <citation type="submission" date="1998-05" db="EMBL/GenBank/DDBJ databases">
        <title>Molecular and biological characterization of a new ring finger protein, MOP-6 which is highly expressed in activated human monocytes.</title>
        <authorList>
            <person name="Fujii Y."/>
            <person name="Takayama K."/>
            <person name="Ukai Y."/>
            <person name="Yoshimoto M."/>
        </authorList>
    </citation>
    <scope>NUCLEOTIDE SEQUENCE [MRNA] OF 377-557</scope>
    <source>
        <tissue>Monocyte</tissue>
    </source>
</reference>
<reference key="11">
    <citation type="journal article" date="2000" name="Cytogenet. Cell Genet.">
        <title>Characterisation of the human and mouse orthologues of the Drosophila ariadne gene.</title>
        <authorList>
            <person name="Tan N.G."/>
            <person name="Ardley H.C."/>
            <person name="Rose S.A."/>
            <person name="Leek J.P."/>
            <person name="Markham A.F."/>
            <person name="Robinson P.A."/>
        </authorList>
    </citation>
    <scope>IDENTIFICATION</scope>
</reference>
<reference key="12">
    <citation type="journal article" date="2001" name="J. Biol. Chem.">
        <title>Features of the parkin/ariadne-like ubiquitin ligase, HHARI, that regulate its interaction with the ubiquitin-conjugating enzyme, Ubch7.</title>
        <authorList>
            <person name="Ardley H.C."/>
            <person name="Tan N.G.S."/>
            <person name="Rose S.A."/>
            <person name="Markham A.F."/>
            <person name="Robinson P.A."/>
        </authorList>
    </citation>
    <scope>INTERACTION WITH UBE2L3</scope>
    <scope>MUTAGENESIS OF 187-GLN-ILE-188; ILE-188; CYS-208 AND TYR-258</scope>
    <scope>SUBCELLULAR LOCATION</scope>
</reference>
<reference key="13">
    <citation type="journal article" date="2003" name="FEBS Lett.">
        <title>Human homologue of ariadne promotes the ubiquitylation of translation initiation factor 4E homologous protein, 4EHP.</title>
        <authorList>
            <person name="Tan N.G."/>
            <person name="Ardley H.C."/>
            <person name="Scott G.B."/>
            <person name="Rose S.A."/>
            <person name="Markham A.F."/>
            <person name="Robinson P.A."/>
        </authorList>
    </citation>
    <scope>FUNCTION</scope>
</reference>
<reference key="14">
    <citation type="journal article" date="2007" name="Genes Dev.">
        <title>ISG15 modification of the eIF4E cognate 4EHP enhances cap structure-binding activity of 4EHP.</title>
        <authorList>
            <person name="Okumura F."/>
            <person name="Zou W."/>
            <person name="Zhang D.E."/>
        </authorList>
    </citation>
    <scope>FUNCTION</scope>
</reference>
<reference key="15">
    <citation type="journal article" date="2009" name="Science">
        <title>Lysine acetylation targets protein complexes and co-regulates major cellular functions.</title>
        <authorList>
            <person name="Choudhary C."/>
            <person name="Kumar C."/>
            <person name="Gnad F."/>
            <person name="Nielsen M.L."/>
            <person name="Rehman M."/>
            <person name="Walther T.C."/>
            <person name="Olsen J.V."/>
            <person name="Mann M."/>
        </authorList>
    </citation>
    <scope>IDENTIFICATION BY MASS SPECTROMETRY [LARGE SCALE ANALYSIS]</scope>
</reference>
<reference key="16">
    <citation type="journal article" date="2011" name="BMC Syst. Biol.">
        <title>Initial characterization of the human central proteome.</title>
        <authorList>
            <person name="Burkard T.R."/>
            <person name="Planyavsky M."/>
            <person name="Kaupe I."/>
            <person name="Breitwieser F.P."/>
            <person name="Buerckstuemmer T."/>
            <person name="Bennett K.L."/>
            <person name="Superti-Furga G."/>
            <person name="Colinge J."/>
        </authorList>
    </citation>
    <scope>IDENTIFICATION BY MASS SPECTROMETRY [LARGE SCALE ANALYSIS]</scope>
</reference>
<reference key="17">
    <citation type="journal article" date="2011" name="Nature">
        <title>UBCH7 reactivity profile reveals parkin and HHARI to be RING/HECT hybrids.</title>
        <authorList>
            <person name="Wenzel D.M."/>
            <person name="Lissounov A."/>
            <person name="Brzovic P.S."/>
            <person name="Klevit R.E."/>
        </authorList>
    </citation>
    <scope>FUNCTION</scope>
    <scope>CATALYTIC ACTIVITY</scope>
    <scope>REACTION MECHANISM</scope>
    <scope>INTERACTION WITH UBE2L3</scope>
    <scope>ACTIVE SITE</scope>
    <scope>DOMAIN</scope>
    <scope>MUTAGENESIS OF CYS-357</scope>
</reference>
<reference key="18">
    <citation type="journal article" date="2012" name="J. Mol. Neurosci.">
        <title>The parkin-like human homolog of Drosophila ariadne-1 (HHARI) can induce aggresome formation in mammalian cells and is immunologically detectable in Lewy bodies.</title>
        <authorList>
            <person name="Parelkar S.S."/>
            <person name="Cadena J.G."/>
            <person name="Kim C."/>
            <person name="Wang Z."/>
            <person name="Sugal R."/>
            <person name="Bentley B."/>
            <person name="Moral L."/>
            <person name="Ardley H.C."/>
            <person name="Schwartz L.M."/>
        </authorList>
    </citation>
    <scope>SUBCELLULAR LOCATION</scope>
</reference>
<reference key="19">
    <citation type="journal article" date="2013" name="EMBO J.">
        <title>TRIAD1 and HHARI bind to and are activated by distinct neddylated Cullin-RING ligase complexes.</title>
        <authorList>
            <person name="Kelsall I.R."/>
            <person name="Duda D.M."/>
            <person name="Olszewski J.L."/>
            <person name="Hofmann K."/>
            <person name="Knebel A."/>
            <person name="Langevin F."/>
            <person name="Wood N."/>
            <person name="Wightman M."/>
            <person name="Schulman B.A."/>
            <person name="Alpi A.F."/>
        </authorList>
    </citation>
    <scope>FUNCTION</scope>
    <scope>INTERACTION WITH UBE2L3</scope>
    <scope>INTERACTION WITH CULLIN-RING COMPLEXES</scope>
    <scope>ACTIVITY REGULATION</scope>
    <scope>MUTAGENESIS OF HIS-205</scope>
</reference>
<reference key="20">
    <citation type="journal article" date="2013" name="Exp. Cell Res.">
        <title>Human homolog of drosophila ariadne (HHARI) is a marker of cellular proliferation associated with nuclear bodies.</title>
        <authorList>
            <person name="Elmehdawi F."/>
            <person name="Wheway G."/>
            <person name="Szymanska K."/>
            <person name="Adams M."/>
            <person name="High A.S."/>
            <person name="Johnson C.A."/>
            <person name="Robinson P.A."/>
        </authorList>
    </citation>
    <scope>SUBCELLULAR LOCATION</scope>
</reference>
<reference key="21">
    <citation type="journal article" date="2015" name="Mol. Cell. Biol.">
        <title>The E3 ubiquitin ligase ARIH1 protects against genotoxic stress by initiating a 4EHP-mediated mRNA translation arrest.</title>
        <authorList>
            <person name="von Stechow L."/>
            <person name="Typas D."/>
            <person name="Carreras Puigvert J."/>
            <person name="Oort L."/>
            <person name="Siddappa R."/>
            <person name="Pines A."/>
            <person name="Vrieling H."/>
            <person name="van de Water B."/>
            <person name="Mullenders L.H."/>
            <person name="Danen E.H."/>
        </authorList>
    </citation>
    <scope>FUNCTION</scope>
    <scope>INDUCTION</scope>
</reference>
<reference key="22">
    <citation type="journal article" date="2016" name="Cell">
        <title>Two distinct types of E3 ligases work in unison to regulate substrate ubiquitylation.</title>
        <authorList>
            <person name="Scott D.C."/>
            <person name="Rhee D.Y."/>
            <person name="Duda D.M."/>
            <person name="Kelsall I.R."/>
            <person name="Olszewski J.L."/>
            <person name="Paulo J.A."/>
            <person name="de Jong A."/>
            <person name="Ovaa H."/>
            <person name="Alpi A.F."/>
            <person name="Harper J.W."/>
            <person name="Schulman B.A."/>
        </authorList>
    </citation>
    <scope>FUNCTION</scope>
    <scope>CATALYTIC ACTIVITY</scope>
    <scope>INTERACTION WITH UBE2L3</scope>
    <scope>INTERACTION WITH CULLIN-RING COMPLEXES</scope>
    <scope>ACTIVITY REGULATION</scope>
    <scope>MUTAGENESIS OF VAL-123; PHE-150; 156-LYS--PHE-158; ILE-188; 257-LYS-TYR-258; 265-SER--VAL-267; 340-ASN-THR-341; 342-LYS-GLU-343; 531-ILE-GLU-352; ASN-358; HIS-359; 378-PRO-TRP-379; 383-GLY--ALA-385; TRP-386; TYR-417; 420-ARG--ASN-423; 430-PHE-GLU-431; TYR-476; GLU-492; ASN-493; GLN-495; GLU-499; GLU-503 AND TYR-531</scope>
</reference>
<reference key="23">
    <citation type="journal article" date="2018" name="Dev. Cell">
        <title>Ari-1 Regulates Myonuclear Organization Together with Parkin and Is Associated with Aortic Aneurysms.</title>
        <authorList>
            <consortium name="University of Washington Center for Mendelian Genomics"/>
            <person name="Tan K.L."/>
            <person name="Haelterman N.A."/>
            <person name="Kwartler C.S."/>
            <person name="Regalado E.S."/>
            <person name="Lee P.T."/>
            <person name="Nagarkar-Jaiswal S."/>
            <person name="Guo D.C."/>
            <person name="Duraine L."/>
            <person name="Wangler M.F."/>
            <person name="Bamshad M.J."/>
            <person name="Nickerson D.A."/>
            <person name="Lin G."/>
            <person name="Milewicz D.M."/>
            <person name="Bellen H.J."/>
        </authorList>
    </citation>
    <scope>FUNCTION</scope>
    <scope>POSSIBLE INVOLVEMENT IN AORTIC ANEURYSM</scope>
    <scope>VARIANTS GLN-15; GLY-44 AND 171-ARG--ASP-557 DEL</scope>
</reference>
<reference key="24">
    <citation type="journal article" date="2004" name="J. Mol. Biol.">
        <title>Structure of the C-terminal RING finger from a RING-IBR-RING/TRIAD motif reveals a novel zinc-binding domain distinct from a RING.</title>
        <authorList>
            <person name="Capili A.D."/>
            <person name="Edghill E.L."/>
            <person name="Wu K."/>
            <person name="Borden K.L."/>
        </authorList>
    </citation>
    <scope>STRUCTURE BY NMR OF 336-394 IN COMPLEX WITH ZINC</scope>
    <scope>FUNCTION</scope>
    <scope>CATALYTIC ACTIVITY</scope>
    <scope>MUTAGENESIS OF CYS-347; ILE-351; CYS-357; HIS-359; CYS-367; PHE-371; CYS-372; TRP-373; TRP-379 AND TRP-386</scope>
</reference>
<reference key="25">
    <citation type="journal article" date="2013" name="PLoS ONE">
        <title>Structure of the HHARI catalytic domain shows glimpses of a HECT E3 ligase.</title>
        <authorList>
            <person name="Spratt D.E."/>
            <person name="Mercier P."/>
            <person name="Shaw G.S."/>
        </authorList>
    </citation>
    <scope>STRUCTURE BY NMR OF 325-396 OF MUTANT CYS-357 IN COMPLEX WITH ZINC</scope>
    <scope>MUTAGENESIS OF CYS-357</scope>
</reference>
<reference key="26">
    <citation type="journal article" date="2013" name="Structure">
        <title>Structure of HHARI, a RING-IBR-RING ubiquitin ligase: autoinhibition of an Ariadne-family E3 and insights into ligation mechanism.</title>
        <authorList>
            <person name="Duda D.M."/>
            <person name="Olszewski J.L."/>
            <person name="Schuermann J.P."/>
            <person name="Kurinov I."/>
            <person name="Miller D.J."/>
            <person name="Nourse A."/>
            <person name="Alpi A.F."/>
            <person name="Schulman B.A."/>
        </authorList>
    </citation>
    <scope>X-RAY CRYSTALLOGRAPHY (3.30 ANGSTROMS) IN COMPLEX WITH ZINC</scope>
    <scope>ACTIVE SITE</scope>
    <scope>DOMAIN</scope>
    <scope>ACTIVITY REGULATION</scope>
    <scope>INTERACTION WITH UBE2L3</scope>
    <scope>FUNCTION</scope>
    <scope>MUTAGENESIS OF ILE-188; PHE-416; 420-ARG--ASN-423; SER-427; 430-PHE-GLU-431 AND GLU-503</scope>
</reference>
<gene>
    <name evidence="25" type="primary">ARIH1</name>
    <name type="synonym">ARI</name>
    <name evidence="21" type="synonym">MOP6</name>
    <name evidence="20" type="synonym">UBCH7BP</name>
    <name evidence="19" type="ORF">HUSSY-27</name>
</gene>
<protein>
    <recommendedName>
        <fullName>E3 ubiquitin-protein ligase ARIH1</fullName>
        <ecNumber evidence="7 9 16">2.3.2.31</ecNumber>
    </recommendedName>
    <alternativeName>
        <fullName evidence="18">H7-AP2</fullName>
    </alternativeName>
    <alternativeName>
        <fullName evidence="20">HHARI</fullName>
    </alternativeName>
    <alternativeName>
        <fullName evidence="21">Monocyte protein 6</fullName>
        <shortName evidence="21">MOP-6</shortName>
    </alternativeName>
    <alternativeName>
        <fullName evidence="22">Protein ariadne-1 homolog</fullName>
        <shortName evidence="22">ARI-1</shortName>
    </alternativeName>
    <alternativeName>
        <fullName evidence="20">UbcH7-binding protein</fullName>
    </alternativeName>
    <alternativeName>
        <fullName>UbcM4-interacting protein</fullName>
    </alternativeName>
    <alternativeName>
        <fullName evidence="18">Ubiquitin-conjugating enzyme E2-binding protein 1</fullName>
    </alternativeName>
</protein>
<feature type="chain" id="PRO_0000055752" description="E3 ubiquitin-protein ligase ARIH1">
    <location>
        <begin position="1"/>
        <end position="557"/>
    </location>
</feature>
<feature type="zinc finger region" description="RING-type 1" evidence="2">
    <location>
        <begin position="186"/>
        <end position="236"/>
    </location>
</feature>
<feature type="zinc finger region" description="IBR-type" evidence="2">
    <location>
        <begin position="256"/>
        <end position="317"/>
    </location>
</feature>
<feature type="zinc finger region" description="RING-type 2; atypical" evidence="2">
    <location>
        <begin position="344"/>
        <end position="375"/>
    </location>
</feature>
<feature type="region of interest" description="Disordered" evidence="3">
    <location>
        <begin position="1"/>
        <end position="95"/>
    </location>
</feature>
<feature type="region of interest" description="UBA-like" evidence="24">
    <location>
        <begin position="105"/>
        <end position="153"/>
    </location>
</feature>
<feature type="region of interest" description="TRIAD supradomain" evidence="2">
    <location>
        <begin position="182"/>
        <end position="393"/>
    </location>
</feature>
<feature type="region of interest" description="Ariadne domain" evidence="24">
    <location>
        <begin position="408"/>
        <end position="557"/>
    </location>
</feature>
<feature type="compositionally biased region" description="Acidic residues" evidence="3">
    <location>
        <begin position="1"/>
        <end position="47"/>
    </location>
</feature>
<feature type="compositionally biased region" description="Gly residues" evidence="3">
    <location>
        <begin position="65"/>
        <end position="92"/>
    </location>
</feature>
<feature type="active site" evidence="2 9 12">
    <location>
        <position position="357"/>
    </location>
</feature>
<feature type="binding site" evidence="2 12 28 29">
    <location>
        <position position="186"/>
    </location>
    <ligand>
        <name>Zn(2+)</name>
        <dbReference type="ChEBI" id="CHEBI:29105"/>
        <label>1</label>
    </ligand>
</feature>
<feature type="binding site" evidence="2 12 28 29">
    <location>
        <position position="189"/>
    </location>
    <ligand>
        <name>Zn(2+)</name>
        <dbReference type="ChEBI" id="CHEBI:29105"/>
        <label>1</label>
    </ligand>
</feature>
<feature type="binding site" evidence="2 12 28 29">
    <location>
        <position position="203"/>
    </location>
    <ligand>
        <name>Zn(2+)</name>
        <dbReference type="ChEBI" id="CHEBI:29105"/>
        <label>2</label>
    </ligand>
</feature>
<feature type="binding site" evidence="2 12 28 29">
    <location>
        <position position="205"/>
    </location>
    <ligand>
        <name>Zn(2+)</name>
        <dbReference type="ChEBI" id="CHEBI:29105"/>
        <label>2</label>
    </ligand>
</feature>
<feature type="binding site" evidence="2 12 28 29">
    <location>
        <position position="208"/>
    </location>
    <ligand>
        <name>Zn(2+)</name>
        <dbReference type="ChEBI" id="CHEBI:29105"/>
        <label>1</label>
    </ligand>
</feature>
<feature type="binding site" evidence="2 12 28 29">
    <location>
        <position position="211"/>
    </location>
    <ligand>
        <name>Zn(2+)</name>
        <dbReference type="ChEBI" id="CHEBI:29105"/>
        <label>1</label>
    </ligand>
</feature>
<feature type="binding site" evidence="2 12 28 29">
    <location>
        <position position="231"/>
    </location>
    <ligand>
        <name>Zn(2+)</name>
        <dbReference type="ChEBI" id="CHEBI:29105"/>
        <label>2</label>
    </ligand>
</feature>
<feature type="binding site" evidence="2 12 28 29">
    <location>
        <position position="236"/>
    </location>
    <ligand>
        <name>Zn(2+)</name>
        <dbReference type="ChEBI" id="CHEBI:29105"/>
        <label>2</label>
    </ligand>
</feature>
<feature type="binding site" evidence="2 12 28 29">
    <location>
        <position position="276"/>
    </location>
    <ligand>
        <name>Zn(2+)</name>
        <dbReference type="ChEBI" id="CHEBI:29105"/>
        <label>3</label>
    </ligand>
</feature>
<feature type="binding site" evidence="2 12 28 29">
    <location>
        <position position="281"/>
    </location>
    <ligand>
        <name>Zn(2+)</name>
        <dbReference type="ChEBI" id="CHEBI:29105"/>
        <label>3</label>
    </ligand>
</feature>
<feature type="binding site" evidence="2 12 28 29">
    <location>
        <position position="297"/>
    </location>
    <ligand>
        <name>Zn(2+)</name>
        <dbReference type="ChEBI" id="CHEBI:29105"/>
        <label>3</label>
    </ligand>
</feature>
<feature type="binding site" evidence="2 12 28 29">
    <location>
        <position position="299"/>
    </location>
    <ligand>
        <name>Zn(2+)</name>
        <dbReference type="ChEBI" id="CHEBI:29105"/>
        <label>3</label>
    </ligand>
</feature>
<feature type="binding site" evidence="2 12 28 29">
    <location>
        <position position="304"/>
    </location>
    <ligand>
        <name>Zn(2+)</name>
        <dbReference type="ChEBI" id="CHEBI:29105"/>
        <label>4</label>
    </ligand>
</feature>
<feature type="binding site" evidence="2 12 28 29">
    <location>
        <position position="307"/>
    </location>
    <ligand>
        <name>Zn(2+)</name>
        <dbReference type="ChEBI" id="CHEBI:29105"/>
        <label>4</label>
    </ligand>
</feature>
<feature type="binding site" evidence="2 12 28 29">
    <location>
        <position position="312"/>
    </location>
    <ligand>
        <name>Zn(2+)</name>
        <dbReference type="ChEBI" id="CHEBI:29105"/>
        <label>4</label>
    </ligand>
</feature>
<feature type="binding site" evidence="2 12 28 29">
    <location>
        <position position="317"/>
    </location>
    <ligand>
        <name>Zn(2+)</name>
        <dbReference type="ChEBI" id="CHEBI:29105"/>
        <label>4</label>
    </ligand>
</feature>
<feature type="binding site" evidence="2 7 12 13 26 27 28 29">
    <location>
        <position position="344"/>
    </location>
    <ligand>
        <name>Zn(2+)</name>
        <dbReference type="ChEBI" id="CHEBI:29105"/>
        <label>5</label>
    </ligand>
</feature>
<feature type="binding site" evidence="2 7 12 13 26 27 28 29">
    <location>
        <position position="347"/>
    </location>
    <ligand>
        <name>Zn(2+)</name>
        <dbReference type="ChEBI" id="CHEBI:29105"/>
        <label>5</label>
    </ligand>
</feature>
<feature type="binding site" evidence="2 7 12 13 26 27 28 29">
    <location>
        <position position="362"/>
    </location>
    <ligand>
        <name>Zn(2+)</name>
        <dbReference type="ChEBI" id="CHEBI:29105"/>
        <label>5</label>
    </ligand>
</feature>
<feature type="binding site" evidence="2 7 12 13 26 27 28 29">
    <location>
        <position position="367"/>
    </location>
    <ligand>
        <name>Zn(2+)</name>
        <dbReference type="ChEBI" id="CHEBI:29105"/>
        <label>5</label>
    </ligand>
</feature>
<feature type="binding site" evidence="2 12 13 27 28 29">
    <location>
        <position position="372"/>
    </location>
    <ligand>
        <name>Zn(2+)</name>
        <dbReference type="ChEBI" id="CHEBI:29105"/>
        <label>6</label>
    </ligand>
</feature>
<feature type="binding site" evidence="2 12 13 27 28 29">
    <location>
        <position position="375"/>
    </location>
    <ligand>
        <name>Zn(2+)</name>
        <dbReference type="ChEBI" id="CHEBI:29105"/>
        <label>6</label>
    </ligand>
</feature>
<feature type="binding site" evidence="2 12 13 27 28 29">
    <location>
        <position position="382"/>
    </location>
    <ligand>
        <name>Zn(2+)</name>
        <dbReference type="ChEBI" id="CHEBI:29105"/>
        <label>6</label>
    </ligand>
</feature>
<feature type="binding site" evidence="2 12 13 27 28 29">
    <location>
        <position position="389"/>
    </location>
    <ligand>
        <name>Zn(2+)</name>
        <dbReference type="ChEBI" id="CHEBI:29105"/>
        <label>6</label>
    </ligand>
</feature>
<feature type="modified residue" description="N6-acetyllysine" evidence="1">
    <location>
        <position position="142"/>
    </location>
</feature>
<feature type="sequence variant" id="VAR_082646" description="Found in a patient with acute aortic dissection and ascending aortic aneurysm; likely pathogenic; dbSNP:rs1052050835." evidence="17">
    <original>E</original>
    <variation>Q</variation>
    <location>
        <position position="15"/>
    </location>
</feature>
<feature type="sequence variant" id="VAR_082647" description="Found in patient with basilar tip artery aneurysm and distal left internal carotid artery aneurysm; uncertain significance; dbSNP:rs2063786716." evidence="17">
    <original>E</original>
    <variation>G</variation>
    <location>
        <position position="44"/>
    </location>
</feature>
<feature type="sequence variant" id="VAR_082648" description="Found in patient with fusiform aneurysm of the aortic root and ascending aorta; likely pathogenic." evidence="17">
    <location>
        <begin position="171"/>
        <end position="557"/>
    </location>
</feature>
<feature type="mutagenesis site" description="Strongly decreased ability to initiate ubiquitination of cullin-RING complexes." evidence="16">
    <original>V</original>
    <variation>A</variation>
    <location>
        <position position="123"/>
    </location>
</feature>
<feature type="mutagenesis site" description="Strongly decreased ability to initiate ubiquitination of cullin-RING complexes." evidence="16">
    <original>F</original>
    <variation>A</variation>
    <location>
        <position position="150"/>
    </location>
</feature>
<feature type="mutagenesis site" description="Strongly decreased ability to initiate ubiquitination of cullin-RING complexes." evidence="16">
    <original>KLF</original>
    <variation>AAA</variation>
    <location>
        <begin position="156"/>
        <end position="158"/>
    </location>
</feature>
<feature type="mutagenesis site" description="No loss of interaction with UBE2L3." evidence="5">
    <original>QI</original>
    <variation>HV</variation>
    <location>
        <begin position="187"/>
        <end position="188"/>
    </location>
</feature>
<feature type="mutagenesis site" description="Loss of interaction with UBE2L3. Decreased E3 ligase activity. Strongly decreased ability to initiate ubiquitination of cullin-RING complexes." evidence="5 12 16">
    <original>I</original>
    <variation>A</variation>
    <location>
        <position position="188"/>
    </location>
</feature>
<feature type="mutagenesis site" description="Impaired interaction with UBE2L3 without affecting interaction with neddylated cullin-RING complexes." evidence="14">
    <original>H</original>
    <variation>A</variation>
    <location>
        <position position="205"/>
    </location>
</feature>
<feature type="mutagenesis site" description="Loss of interaction with UBE2L3." evidence="5">
    <original>C</original>
    <variation>A</variation>
    <variation>H</variation>
    <location>
        <position position="208"/>
    </location>
</feature>
<feature type="mutagenesis site" description="Strongly decreased ability to initiate ubiquitination of cullin-RING complexes." evidence="16">
    <original>KY</original>
    <variation>AAA</variation>
    <location>
        <begin position="257"/>
        <end position="258"/>
    </location>
</feature>
<feature type="mutagenesis site" description="No loss of interaction with UBE2L3." evidence="5">
    <original>Y</original>
    <variation>A</variation>
    <location>
        <position position="258"/>
    </location>
</feature>
<feature type="mutagenesis site" description="Strongly decreased ability to initiate ubiquitination of cullin-RING complexes." evidence="16">
    <original>SFV</original>
    <variation>AAA</variation>
    <location>
        <begin position="265"/>
        <end position="267"/>
    </location>
</feature>
<feature type="mutagenesis site" description="Strongly decreased ability to initiate ubiquitination of cullin-RING complexes." evidence="16">
    <original>NT</original>
    <variation>AA</variation>
    <location>
        <begin position="340"/>
        <end position="341"/>
    </location>
</feature>
<feature type="mutagenesis site" description="Strongly decreased ability to initiate ubiquitination of cullin-RING complexes." evidence="16">
    <original>KE</original>
    <variation>AA</variation>
    <location>
        <begin position="342"/>
        <end position="343"/>
    </location>
</feature>
<feature type="mutagenesis site" description="Impairs zinc-binding and folding. Abolishes E3 ubiquitin-protein ligase activity." evidence="7">
    <original>C</original>
    <variation>A</variation>
    <location>
        <position position="347"/>
    </location>
</feature>
<feature type="mutagenesis site" description="Strongly decreased ability to initiate ubiquitination of cullin-RING complexes." evidence="16">
    <original>IE</original>
    <variation>AA</variation>
    <location>
        <begin position="351"/>
        <end position="352"/>
    </location>
</feature>
<feature type="mutagenesis site" description="Disrupts the hydrophobic network. Abolishes E3 ubiquitin-protein ligase activity." evidence="7">
    <original>I</original>
    <variation>A</variation>
    <location>
        <position position="351"/>
    </location>
</feature>
<feature type="mutagenesis site" description="Does not affect zinc binding and folding. Abolishes ability to transfer ubiquitin and E3 ubiquitin-protein ligase activity." evidence="7 9 13 14">
    <original>C</original>
    <variation>A</variation>
    <variation>S</variation>
    <location>
        <position position="357"/>
    </location>
</feature>
<feature type="mutagenesis site" description="Defects in ligation." evidence="16">
    <original>N</original>
    <variation>A</variation>
    <location>
        <position position="358"/>
    </location>
</feature>
<feature type="mutagenesis site" description="Defects in ligation. Does not affect zinc binding, folding. Does not impair E3 ubiquitin-protein ligase activity." evidence="7 16">
    <original>H</original>
    <variation>A</variation>
    <location>
        <position position="359"/>
    </location>
</feature>
<feature type="mutagenesis site" description="Impairs zinc-binding and folding. Abolishes E3 ubiquitin-protein ligase activity." evidence="7">
    <original>C</original>
    <variation>A</variation>
    <location>
        <position position="367"/>
    </location>
</feature>
<feature type="mutagenesis site" description="Disrupts the hydrophobic network. Abolishes E3 ubiquitin-protein ligase activity." evidence="7">
    <original>F</original>
    <variation>A</variation>
    <location>
        <position position="371"/>
    </location>
</feature>
<feature type="mutagenesis site" description="Impairs E3 ubiquitin-protein ligase activity." evidence="7">
    <original>C</original>
    <variation>A</variation>
    <location>
        <position position="372"/>
    </location>
</feature>
<feature type="mutagenesis site" description="Abolishes E3 ubiquitin-protein ligase activity." evidence="7">
    <original>W</original>
    <variation>A</variation>
    <location>
        <position position="373"/>
    </location>
</feature>
<feature type="mutagenesis site" description="Defects in ligation." evidence="16">
    <original>PW</original>
    <variation>AA</variation>
    <location>
        <begin position="378"/>
        <end position="379"/>
    </location>
</feature>
<feature type="mutagenesis site" description="Does not affect E3 ubiquitin-protein ligase activity." evidence="7">
    <original>W</original>
    <variation>A</variation>
    <location>
        <position position="379"/>
    </location>
</feature>
<feature type="mutagenesis site" description="Defects in ligation." evidence="16">
    <original>GSA</original>
    <variation>AAD</variation>
    <location>
        <begin position="383"/>
        <end position="385"/>
    </location>
</feature>
<feature type="mutagenesis site" description="Does not affect E3 ubiquitin-protein ligase activity. Strongly decreased ability to initiate ubiquitination of cullin-RING complexes." evidence="7 16">
    <original>W</original>
    <variation>A</variation>
    <location>
        <position position="386"/>
    </location>
</feature>
<feature type="mutagenesis site" description="Slightly relieves autoinhibition of the E3 ligase activity by the ariadne domain." evidence="12">
    <original>F</original>
    <variation>A</variation>
    <location>
        <position position="416"/>
    </location>
</feature>
<feature type="mutagenesis site" description="Hyperactive 'open' mutant that displays enhanced E3 ubiquitin-protein ligase activity." evidence="16">
    <original>Y</original>
    <variation>A</variation>
    <location>
        <position position="417"/>
    </location>
</feature>
<feature type="mutagenesis site" description="Slightly relieves autoinhibition of the E3 ligase activity by the ariadne domain. Hyperactive 'open' mutant that displays enhanced E3 ubiquitin-protein ligase activity; when associated with A-503." evidence="12 16">
    <original>RYMN</original>
    <variation>AYMA</variation>
    <location>
        <begin position="420"/>
        <end position="423"/>
    </location>
</feature>
<feature type="mutagenesis site" description="Slightly relieves autoinhibition of the E3 ligase activity by the ariadne domain." evidence="12">
    <original>S</original>
    <variation>A</variation>
    <location>
        <position position="427"/>
    </location>
</feature>
<feature type="mutagenesis site" description="Relieves autoinhibition of the E3 ligase activity by the ariadne domain; when associated with A-503. Hyperactive 'open' mutant that displays enhanced E3 ubiquitin-protein ligase activity; when associated with A-503." evidence="12 14 16">
    <original>FE</original>
    <variation>AA</variation>
    <location>
        <begin position="430"/>
        <end position="431"/>
    </location>
</feature>
<feature type="mutagenesis site" description="Hyperactive 'open' mutant that displays enhanced E3 ubiquitin-protein ligase activity." evidence="16">
    <original>Y</original>
    <variation>A</variation>
    <location>
        <position position="476"/>
    </location>
</feature>
<feature type="mutagenesis site" description="Hyperactive 'open' mutant that displays enhanced E3 ubiquitin-protein ligase activity." evidence="16">
    <original>E</original>
    <variation>A</variation>
    <location>
        <position position="492"/>
    </location>
</feature>
<feature type="mutagenesis site" description="Hyperactive 'open' mutant that displays enhanced E3 ubiquitin-protein ligase activity." evidence="16">
    <original>N</original>
    <variation>A</variation>
    <location>
        <position position="493"/>
    </location>
</feature>
<feature type="mutagenesis site" description="Hyperactive 'open' mutant that displays enhanced E3 ubiquitin-protein ligase activity." evidence="16">
    <original>Q</original>
    <variation>A</variation>
    <location>
        <position position="495"/>
    </location>
</feature>
<feature type="mutagenesis site" description="Hyperactive 'open' mutant that displays enhanced E3 ubiquitin-protein ligase activity." evidence="16">
    <original>E</original>
    <variation>A</variation>
    <location>
        <position position="499"/>
    </location>
</feature>
<feature type="mutagenesis site" description="Relieves autoinhibition of the E3 ligase activity by the ariadne domain; when associated with 430-A-A-431. Hyperactive 'open' mutant that displays enhanced E3 ubiquitin-protein ligase activity; when associated with 430-A-A-431. Hyperactive 'open' mutant that displays enhanced E3 ubiquitin-protein ligase activity; when associated with 420-A--A-423." evidence="12 14 16">
    <original>E</original>
    <variation>A</variation>
    <location>
        <position position="503"/>
    </location>
</feature>
<feature type="mutagenesis site" description="Strongly decreased ability to initiate ubiquitination of cullin-RING complexes." evidence="16">
    <original>Y</original>
    <variation>A</variation>
    <location>
        <position position="531"/>
    </location>
</feature>
<feature type="sequence conflict" description="In Ref. 3; AAD28088." evidence="23" ref="3">
    <original>E</original>
    <variation>D</variation>
    <location>
        <position position="122"/>
    </location>
</feature>
<feature type="sequence conflict" description="In Ref. 1; CAB45870." evidence="23" ref="1">
    <original>Q</original>
    <variation>H</variation>
    <location>
        <position position="227"/>
    </location>
</feature>
<feature type="sequence conflict" description="In Ref. 8; CAA10274." evidence="23" ref="8">
    <original>D</original>
    <variation>N</variation>
    <location>
        <position position="237"/>
    </location>
</feature>
<feature type="sequence conflict" description="In Ref. 9; CAA08817." evidence="23" ref="9">
    <original>F</original>
    <variation>S</variation>
    <location>
        <position position="303"/>
    </location>
</feature>
<feature type="sequence conflict" description="In Ref. 9; CAA08817." evidence="23" ref="9">
    <original>ENWHDPVK</original>
    <variation>AIGMILFQ</variation>
    <location>
        <begin position="309"/>
        <end position="316"/>
    </location>
</feature>
<feature type="sequence conflict" description="In Ref. 9; CAA08817." evidence="23" ref="9">
    <original>K</original>
    <variation>T</variation>
    <location>
        <position position="322"/>
    </location>
</feature>
<feature type="strand" evidence="32">
    <location>
        <begin position="101"/>
        <end position="105"/>
    </location>
</feature>
<feature type="helix" evidence="32">
    <location>
        <begin position="106"/>
        <end position="124"/>
    </location>
</feature>
<feature type="helix" evidence="32">
    <location>
        <begin position="128"/>
        <end position="137"/>
    </location>
</feature>
<feature type="turn" evidence="32">
    <location>
        <begin position="138"/>
        <end position="140"/>
    </location>
</feature>
<feature type="helix" evidence="32">
    <location>
        <begin position="142"/>
        <end position="149"/>
    </location>
</feature>
<feature type="helix" evidence="32">
    <location>
        <begin position="154"/>
        <end position="161"/>
    </location>
</feature>
<feature type="turn" evidence="32">
    <location>
        <begin position="187"/>
        <end position="189"/>
    </location>
</feature>
<feature type="helix" evidence="32">
    <location>
        <begin position="195"/>
        <end position="197"/>
    </location>
</feature>
<feature type="strand" evidence="32">
    <location>
        <begin position="198"/>
        <end position="200"/>
    </location>
</feature>
<feature type="strand" evidence="32">
    <location>
        <begin position="206"/>
        <end position="208"/>
    </location>
</feature>
<feature type="helix" evidence="32">
    <location>
        <begin position="209"/>
        <end position="219"/>
    </location>
</feature>
<feature type="strand" evidence="31">
    <location>
        <begin position="220"/>
        <end position="224"/>
    </location>
</feature>
<feature type="strand" evidence="32">
    <location>
        <begin position="232"/>
        <end position="235"/>
    </location>
</feature>
<feature type="helix" evidence="32">
    <location>
        <begin position="242"/>
        <end position="248"/>
    </location>
</feature>
<feature type="helix" evidence="32">
    <location>
        <begin position="252"/>
        <end position="268"/>
    </location>
</feature>
<feature type="strand" evidence="32">
    <location>
        <begin position="273"/>
        <end position="275"/>
    </location>
</feature>
<feature type="strand" evidence="32">
    <location>
        <begin position="283"/>
        <end position="289"/>
    </location>
</feature>
<feature type="strand" evidence="32">
    <location>
        <begin position="294"/>
        <end position="296"/>
    </location>
</feature>
<feature type="strand" evidence="32">
    <location>
        <begin position="298"/>
        <end position="300"/>
    </location>
</feature>
<feature type="strand" evidence="32">
    <location>
        <begin position="302"/>
        <end position="304"/>
    </location>
</feature>
<feature type="turn" evidence="32">
    <location>
        <begin position="305"/>
        <end position="307"/>
    </location>
</feature>
<feature type="helix" evidence="32">
    <location>
        <begin position="317"/>
        <end position="325"/>
    </location>
</feature>
<feature type="turn" evidence="32">
    <location>
        <begin position="326"/>
        <end position="328"/>
    </location>
</feature>
<feature type="turn" evidence="30">
    <location>
        <begin position="331"/>
        <end position="333"/>
    </location>
</feature>
<feature type="helix" evidence="30">
    <location>
        <begin position="337"/>
        <end position="340"/>
    </location>
</feature>
<feature type="strand" evidence="32">
    <location>
        <begin position="341"/>
        <end position="343"/>
    </location>
</feature>
<feature type="turn" evidence="32">
    <location>
        <begin position="345"/>
        <end position="347"/>
    </location>
</feature>
<feature type="strand" evidence="32">
    <location>
        <begin position="350"/>
        <end position="352"/>
    </location>
</feature>
<feature type="strand" evidence="32">
    <location>
        <begin position="359"/>
        <end position="361"/>
    </location>
</feature>
<feature type="strand" evidence="32">
    <location>
        <begin position="364"/>
        <end position="366"/>
    </location>
</feature>
<feature type="strand" evidence="32">
    <location>
        <begin position="370"/>
        <end position="372"/>
    </location>
</feature>
<feature type="turn" evidence="32">
    <location>
        <begin position="373"/>
        <end position="375"/>
    </location>
</feature>
<feature type="strand" evidence="32">
    <location>
        <begin position="378"/>
        <end position="386"/>
    </location>
</feature>
<feature type="helix" evidence="32">
    <location>
        <begin position="411"/>
        <end position="432"/>
    </location>
</feature>
<feature type="helix" evidence="32">
    <location>
        <begin position="434"/>
        <end position="444"/>
    </location>
</feature>
<feature type="helix" evidence="32">
    <location>
        <begin position="452"/>
        <end position="480"/>
    </location>
</feature>
<feature type="helix" evidence="32">
    <location>
        <begin position="486"/>
        <end position="510"/>
    </location>
</feature>
<feature type="turn" evidence="32">
    <location>
        <begin position="511"/>
        <end position="515"/>
    </location>
</feature>
<feature type="strand" evidence="32">
    <location>
        <begin position="518"/>
        <end position="520"/>
    </location>
</feature>
<feature type="helix" evidence="32">
    <location>
        <begin position="521"/>
        <end position="548"/>
    </location>
</feature>
<evidence type="ECO:0000250" key="1">
    <source>
        <dbReference type="UniProtKB" id="Q9Z1K5"/>
    </source>
</evidence>
<evidence type="ECO:0000255" key="2">
    <source>
        <dbReference type="PROSITE-ProRule" id="PRU01221"/>
    </source>
</evidence>
<evidence type="ECO:0000256" key="3">
    <source>
        <dbReference type="SAM" id="MobiDB-lite"/>
    </source>
</evidence>
<evidence type="ECO:0000269" key="4">
    <source>
    </source>
</evidence>
<evidence type="ECO:0000269" key="5">
    <source>
    </source>
</evidence>
<evidence type="ECO:0000269" key="6">
    <source>
    </source>
</evidence>
<evidence type="ECO:0000269" key="7">
    <source>
    </source>
</evidence>
<evidence type="ECO:0000269" key="8">
    <source>
    </source>
</evidence>
<evidence type="ECO:0000269" key="9">
    <source>
    </source>
</evidence>
<evidence type="ECO:0000269" key="10">
    <source>
    </source>
</evidence>
<evidence type="ECO:0000269" key="11">
    <source>
    </source>
</evidence>
<evidence type="ECO:0000269" key="12">
    <source>
    </source>
</evidence>
<evidence type="ECO:0000269" key="13">
    <source>
    </source>
</evidence>
<evidence type="ECO:0000269" key="14">
    <source>
    </source>
</evidence>
<evidence type="ECO:0000269" key="15">
    <source>
    </source>
</evidence>
<evidence type="ECO:0000269" key="16">
    <source>
    </source>
</evidence>
<evidence type="ECO:0000269" key="17">
    <source>
    </source>
</evidence>
<evidence type="ECO:0000303" key="18">
    <source>
    </source>
</evidence>
<evidence type="ECO:0000303" key="19">
    <source>
    </source>
</evidence>
<evidence type="ECO:0000303" key="20">
    <source>
    </source>
</evidence>
<evidence type="ECO:0000303" key="21">
    <source ref="10"/>
</evidence>
<evidence type="ECO:0000303" key="22">
    <source ref="3"/>
</evidence>
<evidence type="ECO:0000305" key="23"/>
<evidence type="ECO:0000305" key="24">
    <source>
    </source>
</evidence>
<evidence type="ECO:0000312" key="25">
    <source>
        <dbReference type="HGNC" id="HGNC:689"/>
    </source>
</evidence>
<evidence type="ECO:0007744" key="26">
    <source>
        <dbReference type="PDB" id="1WD2"/>
    </source>
</evidence>
<evidence type="ECO:0007744" key="27">
    <source>
        <dbReference type="PDB" id="2M9Y"/>
    </source>
</evidence>
<evidence type="ECO:0007744" key="28">
    <source>
        <dbReference type="PDB" id="4KBL"/>
    </source>
</evidence>
<evidence type="ECO:0007744" key="29">
    <source>
        <dbReference type="PDB" id="4KC9"/>
    </source>
</evidence>
<evidence type="ECO:0007829" key="30">
    <source>
        <dbReference type="PDB" id="2M9Y"/>
    </source>
</evidence>
<evidence type="ECO:0007829" key="31">
    <source>
        <dbReference type="PDB" id="4KBL"/>
    </source>
</evidence>
<evidence type="ECO:0007829" key="32">
    <source>
        <dbReference type="PDB" id="5UDH"/>
    </source>
</evidence>
<name>ARI1_HUMAN</name>
<dbReference type="EC" id="2.3.2.31" evidence="7 9 16"/>
<dbReference type="EMBL" id="AJ243190">
    <property type="protein sequence ID" value="CAB45870.1"/>
    <property type="molecule type" value="mRNA"/>
</dbReference>
<dbReference type="EMBL" id="AF072832">
    <property type="protein sequence ID" value="AAD28088.1"/>
    <property type="molecule type" value="mRNA"/>
</dbReference>
<dbReference type="EMBL" id="AK312715">
    <property type="protein sequence ID" value="BAG35590.1"/>
    <property type="molecule type" value="mRNA"/>
</dbReference>
<dbReference type="EMBL" id="AC079322">
    <property type="status" value="NOT_ANNOTATED_CDS"/>
    <property type="molecule type" value="Genomic_DNA"/>
</dbReference>
<dbReference type="EMBL" id="AC100827">
    <property type="status" value="NOT_ANNOTATED_CDS"/>
    <property type="molecule type" value="Genomic_DNA"/>
</dbReference>
<dbReference type="EMBL" id="CH471082">
    <property type="protein sequence ID" value="EAW77907.1"/>
    <property type="molecule type" value="Genomic_DNA"/>
</dbReference>
<dbReference type="EMBL" id="BC051877">
    <property type="protein sequence ID" value="AAH51877.1"/>
    <property type="molecule type" value="mRNA"/>
</dbReference>
<dbReference type="EMBL" id="AJ130976">
    <property type="protein sequence ID" value="CAA10274.1"/>
    <property type="molecule type" value="mRNA"/>
</dbReference>
<dbReference type="EMBL" id="AJ009771">
    <property type="protein sequence ID" value="CAA08817.1"/>
    <property type="molecule type" value="mRNA"/>
</dbReference>
<dbReference type="EMBL" id="AB014774">
    <property type="protein sequence ID" value="BAB19786.1"/>
    <property type="molecule type" value="mRNA"/>
</dbReference>
<dbReference type="CCDS" id="CCDS10244.1"/>
<dbReference type="RefSeq" id="NP_005735.2">
    <property type="nucleotide sequence ID" value="NM_005744.5"/>
</dbReference>
<dbReference type="PDB" id="1WD2">
    <property type="method" value="NMR"/>
    <property type="chains" value="A=336-394"/>
</dbReference>
<dbReference type="PDB" id="2M9Y">
    <property type="method" value="NMR"/>
    <property type="chains" value="A=325-396"/>
</dbReference>
<dbReference type="PDB" id="4KBL">
    <property type="method" value="X-ray"/>
    <property type="resolution" value="3.30 A"/>
    <property type="chains" value="A/B=1-557"/>
</dbReference>
<dbReference type="PDB" id="4KC9">
    <property type="method" value="X-ray"/>
    <property type="resolution" value="3.60 A"/>
    <property type="chains" value="A=1-557"/>
</dbReference>
<dbReference type="PDB" id="5TTE">
    <property type="method" value="X-ray"/>
    <property type="resolution" value="3.50 A"/>
    <property type="chains" value="B=1-557"/>
</dbReference>
<dbReference type="PDB" id="5UDH">
    <property type="method" value="X-ray"/>
    <property type="resolution" value="3.24 A"/>
    <property type="chains" value="A/B=90-557"/>
</dbReference>
<dbReference type="PDB" id="7B5L">
    <property type="method" value="EM"/>
    <property type="resolution" value="3.80 A"/>
    <property type="chains" value="H=1-557"/>
</dbReference>
<dbReference type="PDB" id="7B5M">
    <property type="method" value="EM"/>
    <property type="resolution" value="3.91 A"/>
    <property type="chains" value="H=1-557"/>
</dbReference>
<dbReference type="PDB" id="7B5N">
    <property type="method" value="EM"/>
    <property type="resolution" value="3.60 A"/>
    <property type="chains" value="H=1-557"/>
</dbReference>
<dbReference type="PDB" id="7B5S">
    <property type="method" value="EM"/>
    <property type="resolution" value="3.60 A"/>
    <property type="chains" value="H=1-557"/>
</dbReference>
<dbReference type="PDBsum" id="1WD2"/>
<dbReference type="PDBsum" id="2M9Y"/>
<dbReference type="PDBsum" id="4KBL"/>
<dbReference type="PDBsum" id="4KC9"/>
<dbReference type="PDBsum" id="5TTE"/>
<dbReference type="PDBsum" id="5UDH"/>
<dbReference type="PDBsum" id="7B5L"/>
<dbReference type="PDBsum" id="7B5M"/>
<dbReference type="PDBsum" id="7B5N"/>
<dbReference type="PDBsum" id="7B5S"/>
<dbReference type="EMDB" id="EMD-12037"/>
<dbReference type="EMDB" id="EMD-12040"/>
<dbReference type="EMDB" id="EMD-12041"/>
<dbReference type="EMDB" id="EMD-12050"/>
<dbReference type="EMDB" id="EMD-46644"/>
<dbReference type="SMR" id="Q9Y4X5"/>
<dbReference type="BioGRID" id="117348">
    <property type="interactions" value="276"/>
</dbReference>
<dbReference type="DIP" id="DIP-53626N"/>
<dbReference type="FunCoup" id="Q9Y4X5">
    <property type="interactions" value="4575"/>
</dbReference>
<dbReference type="IntAct" id="Q9Y4X5">
    <property type="interactions" value="105"/>
</dbReference>
<dbReference type="MINT" id="Q9Y4X5"/>
<dbReference type="STRING" id="9606.ENSP00000369217"/>
<dbReference type="GlyGen" id="Q9Y4X5">
    <property type="glycosylation" value="1 site, 1 O-linked glycan (1 site)"/>
</dbReference>
<dbReference type="iPTMnet" id="Q9Y4X5"/>
<dbReference type="MetOSite" id="Q9Y4X5"/>
<dbReference type="PhosphoSitePlus" id="Q9Y4X5"/>
<dbReference type="BioMuta" id="ARIH1"/>
<dbReference type="DMDM" id="20532376"/>
<dbReference type="jPOST" id="Q9Y4X5"/>
<dbReference type="MassIVE" id="Q9Y4X5"/>
<dbReference type="PaxDb" id="9606-ENSP00000369217"/>
<dbReference type="PeptideAtlas" id="Q9Y4X5"/>
<dbReference type="ProteomicsDB" id="86264"/>
<dbReference type="Pumba" id="Q9Y4X5"/>
<dbReference type="Antibodypedia" id="1143">
    <property type="antibodies" value="103 antibodies from 28 providers"/>
</dbReference>
<dbReference type="DNASU" id="25820"/>
<dbReference type="Ensembl" id="ENST00000379887.9">
    <property type="protein sequence ID" value="ENSP00000369217.4"/>
    <property type="gene ID" value="ENSG00000166233.15"/>
</dbReference>
<dbReference type="GeneID" id="25820"/>
<dbReference type="KEGG" id="hsa:25820"/>
<dbReference type="MANE-Select" id="ENST00000379887.9">
    <property type="protein sequence ID" value="ENSP00000369217.4"/>
    <property type="RefSeq nucleotide sequence ID" value="NM_005744.5"/>
    <property type="RefSeq protein sequence ID" value="NP_005735.2"/>
</dbReference>
<dbReference type="UCSC" id="uc002aut.5">
    <property type="organism name" value="human"/>
</dbReference>
<dbReference type="AGR" id="HGNC:689"/>
<dbReference type="CTD" id="25820"/>
<dbReference type="DisGeNET" id="25820"/>
<dbReference type="GeneCards" id="ARIH1"/>
<dbReference type="HGNC" id="HGNC:689">
    <property type="gene designation" value="ARIH1"/>
</dbReference>
<dbReference type="HPA" id="ENSG00000166233">
    <property type="expression patterns" value="Tissue enhanced (skeletal muscle, testis)"/>
</dbReference>
<dbReference type="MalaCards" id="ARIH1"/>
<dbReference type="MIM" id="605624">
    <property type="type" value="gene"/>
</dbReference>
<dbReference type="neXtProt" id="NX_Q9Y4X5"/>
<dbReference type="OpenTargets" id="ENSG00000166233"/>
<dbReference type="PharmGKB" id="PA24982"/>
<dbReference type="VEuPathDB" id="HostDB:ENSG00000166233"/>
<dbReference type="eggNOG" id="KOG1815">
    <property type="taxonomic scope" value="Eukaryota"/>
</dbReference>
<dbReference type="GeneTree" id="ENSGT00940000155744"/>
<dbReference type="HOGENOM" id="CLU_009823_4_2_1"/>
<dbReference type="InParanoid" id="Q9Y4X5"/>
<dbReference type="OMA" id="HRFCMIC"/>
<dbReference type="OrthoDB" id="10009520at2759"/>
<dbReference type="PAN-GO" id="Q9Y4X5">
    <property type="GO annotations" value="8 GO annotations based on evolutionary models"/>
</dbReference>
<dbReference type="PhylomeDB" id="Q9Y4X5"/>
<dbReference type="TreeFam" id="TF300805"/>
<dbReference type="BRENDA" id="2.3.2.27">
    <property type="organism ID" value="2681"/>
</dbReference>
<dbReference type="BRENDA" id="2.3.2.31">
    <property type="organism ID" value="2681"/>
</dbReference>
<dbReference type="PathwayCommons" id="Q9Y4X5"/>
<dbReference type="Reactome" id="R-HSA-1169408">
    <property type="pathway name" value="ISG15 antiviral mechanism"/>
</dbReference>
<dbReference type="Reactome" id="R-HSA-9833110">
    <property type="pathway name" value="RSV-host interactions"/>
</dbReference>
<dbReference type="Reactome" id="R-HSA-9833482">
    <property type="pathway name" value="PKR-mediated signaling"/>
</dbReference>
<dbReference type="Reactome" id="R-HSA-9909505">
    <property type="pathway name" value="Modulation of host responses by IFN-stimulated genes"/>
</dbReference>
<dbReference type="SignaLink" id="Q9Y4X5"/>
<dbReference type="SIGNOR" id="Q9Y4X5"/>
<dbReference type="UniPathway" id="UPA00143"/>
<dbReference type="BioGRID-ORCS" id="25820">
    <property type="hits" value="802 hits in 1207 CRISPR screens"/>
</dbReference>
<dbReference type="CD-CODE" id="6F24707C">
    <property type="entry name" value="Cajal body"/>
</dbReference>
<dbReference type="ChiTaRS" id="ARIH1">
    <property type="organism name" value="human"/>
</dbReference>
<dbReference type="EvolutionaryTrace" id="Q9Y4X5"/>
<dbReference type="GeneWiki" id="ARIH1"/>
<dbReference type="GenomeRNAi" id="25820"/>
<dbReference type="Pharos" id="Q9Y4X5">
    <property type="development level" value="Tbio"/>
</dbReference>
<dbReference type="PRO" id="PR:Q9Y4X5"/>
<dbReference type="Proteomes" id="UP000005640">
    <property type="component" value="Chromosome 15"/>
</dbReference>
<dbReference type="RNAct" id="Q9Y4X5">
    <property type="molecule type" value="protein"/>
</dbReference>
<dbReference type="Bgee" id="ENSG00000166233">
    <property type="expression patterns" value="Expressed in secondary oocyte and 212 other cell types or tissues"/>
</dbReference>
<dbReference type="ExpressionAtlas" id="Q9Y4X5">
    <property type="expression patterns" value="baseline and differential"/>
</dbReference>
<dbReference type="GO" id="GO:0015030">
    <property type="term" value="C:Cajal body"/>
    <property type="evidence" value="ECO:0007669"/>
    <property type="project" value="UniProtKB-SubCell"/>
</dbReference>
<dbReference type="GO" id="GO:0005737">
    <property type="term" value="C:cytoplasm"/>
    <property type="evidence" value="ECO:0000314"/>
    <property type="project" value="UniProtKB"/>
</dbReference>
<dbReference type="GO" id="GO:0005829">
    <property type="term" value="C:cytosol"/>
    <property type="evidence" value="ECO:0000304"/>
    <property type="project" value="Reactome"/>
</dbReference>
<dbReference type="GO" id="GO:0097413">
    <property type="term" value="C:Lewy body"/>
    <property type="evidence" value="ECO:0000314"/>
    <property type="project" value="UniProtKB"/>
</dbReference>
<dbReference type="GO" id="GO:0016604">
    <property type="term" value="C:nuclear body"/>
    <property type="evidence" value="ECO:0000314"/>
    <property type="project" value="UniProtKB"/>
</dbReference>
<dbReference type="GO" id="GO:0005654">
    <property type="term" value="C:nucleoplasm"/>
    <property type="evidence" value="ECO:0000314"/>
    <property type="project" value="HPA"/>
</dbReference>
<dbReference type="GO" id="GO:0005634">
    <property type="term" value="C:nucleus"/>
    <property type="evidence" value="ECO:0000318"/>
    <property type="project" value="GO_Central"/>
</dbReference>
<dbReference type="GO" id="GO:0000151">
    <property type="term" value="C:ubiquitin ligase complex"/>
    <property type="evidence" value="ECO:0000318"/>
    <property type="project" value="GO_Central"/>
</dbReference>
<dbReference type="GO" id="GO:0031624">
    <property type="term" value="F:ubiquitin conjugating enzyme binding"/>
    <property type="evidence" value="ECO:0000353"/>
    <property type="project" value="UniProtKB"/>
</dbReference>
<dbReference type="GO" id="GO:0061630">
    <property type="term" value="F:ubiquitin protein ligase activity"/>
    <property type="evidence" value="ECO:0000318"/>
    <property type="project" value="GO_Central"/>
</dbReference>
<dbReference type="GO" id="GO:0031625">
    <property type="term" value="F:ubiquitin protein ligase binding"/>
    <property type="evidence" value="ECO:0000353"/>
    <property type="project" value="UniProtKB"/>
</dbReference>
<dbReference type="GO" id="GO:0019787">
    <property type="term" value="F:ubiquitin-like protein transferase activity"/>
    <property type="evidence" value="ECO:0000304"/>
    <property type="project" value="UniProtKB"/>
</dbReference>
<dbReference type="GO" id="GO:0004842">
    <property type="term" value="F:ubiquitin-protein transferase activity"/>
    <property type="evidence" value="ECO:0000314"/>
    <property type="project" value="UniProtKB"/>
</dbReference>
<dbReference type="GO" id="GO:0008270">
    <property type="term" value="F:zinc ion binding"/>
    <property type="evidence" value="ECO:0000314"/>
    <property type="project" value="UniProtKB"/>
</dbReference>
<dbReference type="GO" id="GO:0039585">
    <property type="term" value="P:PKR/eIFalpha signaling"/>
    <property type="evidence" value="ECO:0000304"/>
    <property type="project" value="Reactome"/>
</dbReference>
<dbReference type="GO" id="GO:0016567">
    <property type="term" value="P:protein ubiquitination"/>
    <property type="evidence" value="ECO:0000314"/>
    <property type="project" value="UniProtKB"/>
</dbReference>
<dbReference type="GO" id="GO:0006511">
    <property type="term" value="P:ubiquitin-dependent protein catabolic process"/>
    <property type="evidence" value="ECO:0000318"/>
    <property type="project" value="GO_Central"/>
</dbReference>
<dbReference type="CDD" id="cd20343">
    <property type="entry name" value="BRcat_RBR_HHARI-like"/>
    <property type="match status" value="1"/>
</dbReference>
<dbReference type="CDD" id="cd20356">
    <property type="entry name" value="Rcat_RBR_HHARI-like"/>
    <property type="match status" value="1"/>
</dbReference>
<dbReference type="CDD" id="cd16626">
    <property type="entry name" value="RING-HC_RBR_HHARI"/>
    <property type="match status" value="1"/>
</dbReference>
<dbReference type="FunFam" id="1.20.120.1750:FF:000002">
    <property type="entry name" value="RBR-type E3 ubiquitin transferase"/>
    <property type="match status" value="1"/>
</dbReference>
<dbReference type="FunFam" id="3.30.40.10:FF:000019">
    <property type="entry name" value="RBR-type E3 ubiquitin transferase"/>
    <property type="match status" value="1"/>
</dbReference>
<dbReference type="Gene3D" id="1.20.120.1750">
    <property type="match status" value="1"/>
</dbReference>
<dbReference type="Gene3D" id="3.30.40.10">
    <property type="entry name" value="Zinc/RING finger domain, C3HC4 (zinc finger)"/>
    <property type="match status" value="1"/>
</dbReference>
<dbReference type="InterPro" id="IPR045840">
    <property type="entry name" value="Ariadne"/>
</dbReference>
<dbReference type="InterPro" id="IPR048962">
    <property type="entry name" value="ARIH1-like_UBL"/>
</dbReference>
<dbReference type="InterPro" id="IPR031127">
    <property type="entry name" value="E3_UB_ligase_RBR"/>
</dbReference>
<dbReference type="InterPro" id="IPR002867">
    <property type="entry name" value="IBR_dom"/>
</dbReference>
<dbReference type="InterPro" id="IPR044066">
    <property type="entry name" value="TRIAD_supradom"/>
</dbReference>
<dbReference type="InterPro" id="IPR018957">
    <property type="entry name" value="Znf_C3HC4_RING-type"/>
</dbReference>
<dbReference type="InterPro" id="IPR001841">
    <property type="entry name" value="Znf_RING"/>
</dbReference>
<dbReference type="InterPro" id="IPR013083">
    <property type="entry name" value="Znf_RING/FYVE/PHD"/>
</dbReference>
<dbReference type="PANTHER" id="PTHR11685">
    <property type="entry name" value="RBR FAMILY RING FINGER AND IBR DOMAIN-CONTAINING"/>
    <property type="match status" value="1"/>
</dbReference>
<dbReference type="Pfam" id="PF19422">
    <property type="entry name" value="Ariadne"/>
    <property type="match status" value="1"/>
</dbReference>
<dbReference type="Pfam" id="PF01485">
    <property type="entry name" value="IBR"/>
    <property type="match status" value="1"/>
</dbReference>
<dbReference type="Pfam" id="PF22191">
    <property type="entry name" value="IBR_1"/>
    <property type="match status" value="1"/>
</dbReference>
<dbReference type="Pfam" id="PF21235">
    <property type="entry name" value="UBA_ARI1"/>
    <property type="match status" value="1"/>
</dbReference>
<dbReference type="Pfam" id="PF00097">
    <property type="entry name" value="zf-C3HC4"/>
    <property type="match status" value="1"/>
</dbReference>
<dbReference type="SMART" id="SM00647">
    <property type="entry name" value="IBR"/>
    <property type="match status" value="2"/>
</dbReference>
<dbReference type="SMART" id="SM00184">
    <property type="entry name" value="RING"/>
    <property type="match status" value="2"/>
</dbReference>
<dbReference type="SUPFAM" id="SSF57850">
    <property type="entry name" value="RING/U-box"/>
    <property type="match status" value="3"/>
</dbReference>
<dbReference type="PROSITE" id="PS51873">
    <property type="entry name" value="TRIAD"/>
    <property type="match status" value="1"/>
</dbReference>
<dbReference type="PROSITE" id="PS50089">
    <property type="entry name" value="ZF_RING_2"/>
    <property type="match status" value="1"/>
</dbReference>